<dbReference type="EC" id="5.6.1.7" evidence="1"/>
<dbReference type="EMBL" id="BA000039">
    <property type="protein sequence ID" value="BAC07738.1"/>
    <property type="molecule type" value="Genomic_DNA"/>
</dbReference>
<dbReference type="RefSeq" id="NP_680976.1">
    <property type="nucleotide sequence ID" value="NC_004113.1"/>
</dbReference>
<dbReference type="RefSeq" id="WP_011056040.1">
    <property type="nucleotide sequence ID" value="NC_004113.1"/>
</dbReference>
<dbReference type="SMR" id="Q8DMD4"/>
<dbReference type="STRING" id="197221.gene:10746766"/>
<dbReference type="EnsemblBacteria" id="BAC07738">
    <property type="protein sequence ID" value="BAC07738"/>
    <property type="gene ID" value="BAC07738"/>
</dbReference>
<dbReference type="KEGG" id="tel:tll0185"/>
<dbReference type="PATRIC" id="fig|197221.4.peg.191"/>
<dbReference type="eggNOG" id="COG0459">
    <property type="taxonomic scope" value="Bacteria"/>
</dbReference>
<dbReference type="Proteomes" id="UP000000440">
    <property type="component" value="Chromosome"/>
</dbReference>
<dbReference type="GO" id="GO:0005737">
    <property type="term" value="C:cytoplasm"/>
    <property type="evidence" value="ECO:0007669"/>
    <property type="project" value="UniProtKB-SubCell"/>
</dbReference>
<dbReference type="GO" id="GO:0005524">
    <property type="term" value="F:ATP binding"/>
    <property type="evidence" value="ECO:0007669"/>
    <property type="project" value="UniProtKB-UniRule"/>
</dbReference>
<dbReference type="GO" id="GO:0140662">
    <property type="term" value="F:ATP-dependent protein folding chaperone"/>
    <property type="evidence" value="ECO:0007669"/>
    <property type="project" value="InterPro"/>
</dbReference>
<dbReference type="GO" id="GO:0016853">
    <property type="term" value="F:isomerase activity"/>
    <property type="evidence" value="ECO:0007669"/>
    <property type="project" value="UniProtKB-KW"/>
</dbReference>
<dbReference type="GO" id="GO:0051082">
    <property type="term" value="F:unfolded protein binding"/>
    <property type="evidence" value="ECO:0007669"/>
    <property type="project" value="UniProtKB-UniRule"/>
</dbReference>
<dbReference type="GO" id="GO:0042026">
    <property type="term" value="P:protein refolding"/>
    <property type="evidence" value="ECO:0007669"/>
    <property type="project" value="UniProtKB-UniRule"/>
</dbReference>
<dbReference type="CDD" id="cd03344">
    <property type="entry name" value="GroEL"/>
    <property type="match status" value="1"/>
</dbReference>
<dbReference type="FunFam" id="3.50.7.10:FF:000001">
    <property type="entry name" value="60 kDa chaperonin"/>
    <property type="match status" value="1"/>
</dbReference>
<dbReference type="Gene3D" id="3.50.7.10">
    <property type="entry name" value="GroEL"/>
    <property type="match status" value="1"/>
</dbReference>
<dbReference type="Gene3D" id="1.10.560.10">
    <property type="entry name" value="GroEL-like equatorial domain"/>
    <property type="match status" value="1"/>
</dbReference>
<dbReference type="Gene3D" id="3.30.260.10">
    <property type="entry name" value="TCP-1-like chaperonin intermediate domain"/>
    <property type="match status" value="1"/>
</dbReference>
<dbReference type="HAMAP" id="MF_00600">
    <property type="entry name" value="CH60"/>
    <property type="match status" value="1"/>
</dbReference>
<dbReference type="InterPro" id="IPR018370">
    <property type="entry name" value="Chaperonin_Cpn60_CS"/>
</dbReference>
<dbReference type="InterPro" id="IPR001844">
    <property type="entry name" value="Cpn60/GroEL"/>
</dbReference>
<dbReference type="InterPro" id="IPR002423">
    <property type="entry name" value="Cpn60/GroEL/TCP-1"/>
</dbReference>
<dbReference type="InterPro" id="IPR027409">
    <property type="entry name" value="GroEL-like_apical_dom_sf"/>
</dbReference>
<dbReference type="InterPro" id="IPR027413">
    <property type="entry name" value="GROEL-like_equatorial_sf"/>
</dbReference>
<dbReference type="InterPro" id="IPR027410">
    <property type="entry name" value="TCP-1-like_intermed_sf"/>
</dbReference>
<dbReference type="NCBIfam" id="TIGR02348">
    <property type="entry name" value="GroEL"/>
    <property type="match status" value="1"/>
</dbReference>
<dbReference type="NCBIfam" id="NF000592">
    <property type="entry name" value="PRK00013.1"/>
    <property type="match status" value="1"/>
</dbReference>
<dbReference type="NCBIfam" id="NF009487">
    <property type="entry name" value="PRK12849.1"/>
    <property type="match status" value="1"/>
</dbReference>
<dbReference type="NCBIfam" id="NF009488">
    <property type="entry name" value="PRK12850.1"/>
    <property type="match status" value="1"/>
</dbReference>
<dbReference type="NCBIfam" id="NF009489">
    <property type="entry name" value="PRK12851.1"/>
    <property type="match status" value="1"/>
</dbReference>
<dbReference type="PANTHER" id="PTHR45633">
    <property type="entry name" value="60 KDA HEAT SHOCK PROTEIN, MITOCHONDRIAL"/>
    <property type="match status" value="1"/>
</dbReference>
<dbReference type="Pfam" id="PF00118">
    <property type="entry name" value="Cpn60_TCP1"/>
    <property type="match status" value="1"/>
</dbReference>
<dbReference type="PRINTS" id="PR00298">
    <property type="entry name" value="CHAPERONIN60"/>
</dbReference>
<dbReference type="SUPFAM" id="SSF52029">
    <property type="entry name" value="GroEL apical domain-like"/>
    <property type="match status" value="1"/>
</dbReference>
<dbReference type="SUPFAM" id="SSF48592">
    <property type="entry name" value="GroEL equatorial domain-like"/>
    <property type="match status" value="2"/>
</dbReference>
<dbReference type="PROSITE" id="PS00296">
    <property type="entry name" value="CHAPERONINS_CPN60"/>
    <property type="match status" value="1"/>
</dbReference>
<name>CH601_THEVB</name>
<protein>
    <recommendedName>
        <fullName evidence="1">Chaperonin GroEL 1</fullName>
        <ecNumber evidence="1">5.6.1.7</ecNumber>
    </recommendedName>
    <alternativeName>
        <fullName evidence="1">60 kDa chaperonin 1</fullName>
    </alternativeName>
    <alternativeName>
        <fullName evidence="1">Chaperonin-60 1</fullName>
        <shortName evidence="1">Cpn60 1</shortName>
    </alternativeName>
</protein>
<comment type="function">
    <text evidence="1">Together with its co-chaperonin GroES, plays an essential role in assisting protein folding. The GroEL-GroES system forms a nano-cage that allows encapsulation of the non-native substrate proteins and provides a physical environment optimized to promote and accelerate protein folding.</text>
</comment>
<comment type="catalytic activity">
    <reaction evidence="1">
        <text>ATP + H2O + a folded polypeptide = ADP + phosphate + an unfolded polypeptide.</text>
        <dbReference type="EC" id="5.6.1.7"/>
    </reaction>
</comment>
<comment type="subunit">
    <text evidence="1">Forms a cylinder of 14 subunits composed of two heptameric rings stacked back-to-back. Interacts with the co-chaperonin GroES.</text>
</comment>
<comment type="subcellular location">
    <subcellularLocation>
        <location evidence="1">Cytoplasm</location>
    </subcellularLocation>
</comment>
<comment type="similarity">
    <text evidence="1">Belongs to the chaperonin (HSP60) family.</text>
</comment>
<proteinExistence type="inferred from homology"/>
<keyword id="KW-0067">ATP-binding</keyword>
<keyword id="KW-0143">Chaperone</keyword>
<keyword id="KW-0963">Cytoplasm</keyword>
<keyword id="KW-0413">Isomerase</keyword>
<keyword id="KW-0547">Nucleotide-binding</keyword>
<keyword id="KW-1185">Reference proteome</keyword>
<evidence type="ECO:0000255" key="1">
    <source>
        <dbReference type="HAMAP-Rule" id="MF_00600"/>
    </source>
</evidence>
<evidence type="ECO:0000256" key="2">
    <source>
        <dbReference type="SAM" id="MobiDB-lite"/>
    </source>
</evidence>
<feature type="chain" id="PRO_0000063566" description="Chaperonin GroEL 1">
    <location>
        <begin position="1"/>
        <end position="545"/>
    </location>
</feature>
<feature type="region of interest" description="Disordered" evidence="2">
    <location>
        <begin position="525"/>
        <end position="545"/>
    </location>
</feature>
<feature type="compositionally biased region" description="Gly residues" evidence="2">
    <location>
        <begin position="535"/>
        <end position="545"/>
    </location>
</feature>
<feature type="binding site" evidence="1">
    <location>
        <begin position="29"/>
        <end position="32"/>
    </location>
    <ligand>
        <name>ATP</name>
        <dbReference type="ChEBI" id="CHEBI:30616"/>
    </ligand>
</feature>
<feature type="binding site" evidence="1">
    <location>
        <begin position="86"/>
        <end position="90"/>
    </location>
    <ligand>
        <name>ATP</name>
        <dbReference type="ChEBI" id="CHEBI:30616"/>
    </ligand>
</feature>
<feature type="binding site" evidence="1">
    <location>
        <position position="413"/>
    </location>
    <ligand>
        <name>ATP</name>
        <dbReference type="ChEBI" id="CHEBI:30616"/>
    </ligand>
</feature>
<feature type="binding site" evidence="1">
    <location>
        <begin position="479"/>
        <end position="481"/>
    </location>
    <ligand>
        <name>ATP</name>
        <dbReference type="ChEBI" id="CHEBI:30616"/>
    </ligand>
</feature>
<feature type="binding site" evidence="1">
    <location>
        <position position="495"/>
    </location>
    <ligand>
        <name>ATP</name>
        <dbReference type="ChEBI" id="CHEBI:30616"/>
    </ligand>
</feature>
<reference key="1">
    <citation type="journal article" date="2002" name="DNA Res.">
        <title>Complete genome structure of the thermophilic cyanobacterium Thermosynechococcus elongatus BP-1.</title>
        <authorList>
            <person name="Nakamura Y."/>
            <person name="Kaneko T."/>
            <person name="Sato S."/>
            <person name="Ikeuchi M."/>
            <person name="Katoh H."/>
            <person name="Sasamoto S."/>
            <person name="Watanabe A."/>
            <person name="Iriguchi M."/>
            <person name="Kawashima K."/>
            <person name="Kimura T."/>
            <person name="Kishida Y."/>
            <person name="Kiyokawa C."/>
            <person name="Kohara M."/>
            <person name="Matsumoto M."/>
            <person name="Matsuno A."/>
            <person name="Nakazaki N."/>
            <person name="Shimpo S."/>
            <person name="Sugimoto M."/>
            <person name="Takeuchi C."/>
            <person name="Yamada M."/>
            <person name="Tabata S."/>
        </authorList>
    </citation>
    <scope>NUCLEOTIDE SEQUENCE [LARGE SCALE GENOMIC DNA]</scope>
    <source>
        <strain>NIES-2133 / IAM M-273 / BP-1</strain>
    </source>
</reference>
<organism>
    <name type="scientific">Thermosynechococcus vestitus (strain NIES-2133 / IAM M-273 / BP-1)</name>
    <dbReference type="NCBI Taxonomy" id="197221"/>
    <lineage>
        <taxon>Bacteria</taxon>
        <taxon>Bacillati</taxon>
        <taxon>Cyanobacteriota</taxon>
        <taxon>Cyanophyceae</taxon>
        <taxon>Acaryochloridales</taxon>
        <taxon>Thermosynechococcaceae</taxon>
        <taxon>Thermosynechococcus</taxon>
    </lineage>
</organism>
<gene>
    <name evidence="1" type="primary">groEL1</name>
    <name evidence="1" type="synonym">groL1</name>
    <name type="ordered locus">tll0185</name>
</gene>
<accession>Q8DMD4</accession>
<sequence>MAKRIIYNENARRALEKGMDILAESVAVTLGPKGRNVVLEKKFGAPQIVNDGVTIAKEIELEDHIENTGVALIRQAASKTNDAAGDGTTTATVLAHAMVKEGLRNVAAGANPIALKRGIDKATQFLVEKIAEHARPVEDSKAIAQVAAISAGNDEEVGRMIADAMDKVGKEGVISLEEGKSMTTELEVTEGMRFDKGYISPYFATDTERMEAVLDEPFVLVTDKKITLVQDLVPILEQVARAGKPLVIIAEDIEKEALATLVVNRLRGVLNVAAVKAPGFGDRRKAMLEDIAVLTAGQVITEDAGLKLENAKLDMLGKARRITITKDHTTIVAEGNEKAVKARCEQIRRQIEETDSSYDKEKLQERLAKLAGGVAVIKVGAATETEMKDRKLRLEDAINATKAAVEEGIVPGGGTTLVHLAPELSNWAAEHLTGEELIGANIVERALSAPLRRIAENAGQNGAIIVERVKEKPFDVGYDAAKDEYVNMFDAGIVDPAKVTRSALQNAASIAGMVLTTECIIVDKPEPKENNPAGSGAGMGGDFDY</sequence>